<proteinExistence type="inferred from homology"/>
<keyword id="KW-0997">Cell inner membrane</keyword>
<keyword id="KW-1003">Cell membrane</keyword>
<keyword id="KW-0472">Membrane</keyword>
<keyword id="KW-1185">Reference proteome</keyword>
<keyword id="KW-0812">Transmembrane</keyword>
<keyword id="KW-1133">Transmembrane helix</keyword>
<keyword id="KW-0813">Transport</keyword>
<evidence type="ECO:0000255" key="1">
    <source>
        <dbReference type="HAMAP-Rule" id="MF_01436"/>
    </source>
</evidence>
<feature type="chain" id="PRO_1000184905" description="Enterobactin exporter EntS">
    <location>
        <begin position="1"/>
        <end position="416"/>
    </location>
</feature>
<feature type="topological domain" description="Cytoplasmic" evidence="1">
    <location>
        <begin position="1"/>
        <end position="21"/>
    </location>
</feature>
<feature type="transmembrane region" description="Helical" evidence="1">
    <location>
        <begin position="22"/>
        <end position="42"/>
    </location>
</feature>
<feature type="topological domain" description="Periplasmic" evidence="1">
    <location>
        <begin position="43"/>
        <end position="55"/>
    </location>
</feature>
<feature type="transmembrane region" description="Helical" evidence="1">
    <location>
        <begin position="56"/>
        <end position="76"/>
    </location>
</feature>
<feature type="topological domain" description="Cytoplasmic" evidence="1">
    <location>
        <begin position="77"/>
        <end position="83"/>
    </location>
</feature>
<feature type="transmembrane region" description="Helical" evidence="1">
    <location>
        <begin position="84"/>
        <end position="104"/>
    </location>
</feature>
<feature type="topological domain" description="Periplasmic" evidence="1">
    <location>
        <begin position="105"/>
        <end position="109"/>
    </location>
</feature>
<feature type="transmembrane region" description="Helical" evidence="1">
    <location>
        <begin position="110"/>
        <end position="130"/>
    </location>
</feature>
<feature type="topological domain" description="Cytoplasmic" evidence="1">
    <location>
        <begin position="131"/>
        <end position="156"/>
    </location>
</feature>
<feature type="transmembrane region" description="Helical" evidence="1">
    <location>
        <begin position="157"/>
        <end position="177"/>
    </location>
</feature>
<feature type="topological domain" description="Periplasmic" evidence="1">
    <location>
        <position position="178"/>
    </location>
</feature>
<feature type="transmembrane region" description="Helical" evidence="1">
    <location>
        <begin position="179"/>
        <end position="199"/>
    </location>
</feature>
<feature type="topological domain" description="Cytoplasmic" evidence="1">
    <location>
        <begin position="200"/>
        <end position="218"/>
    </location>
</feature>
<feature type="transmembrane region" description="Helical" evidence="1">
    <location>
        <begin position="219"/>
        <end position="239"/>
    </location>
</feature>
<feature type="topological domain" description="Periplasmic" evidence="1">
    <location>
        <begin position="240"/>
        <end position="256"/>
    </location>
</feature>
<feature type="transmembrane region" description="Helical" evidence="1">
    <location>
        <begin position="257"/>
        <end position="277"/>
    </location>
</feature>
<feature type="topological domain" description="Cytoplasmic" evidence="1">
    <location>
        <begin position="278"/>
        <end position="287"/>
    </location>
</feature>
<feature type="transmembrane region" description="Helical" evidence="1">
    <location>
        <begin position="288"/>
        <end position="307"/>
    </location>
</feature>
<feature type="topological domain" description="Periplasmic" evidence="1">
    <location>
        <begin position="308"/>
        <end position="313"/>
    </location>
</feature>
<feature type="transmembrane region" description="Helical" evidence="1">
    <location>
        <begin position="314"/>
        <end position="336"/>
    </location>
</feature>
<feature type="topological domain" description="Cytoplasmic" evidence="1">
    <location>
        <begin position="337"/>
        <end position="356"/>
    </location>
</feature>
<feature type="transmembrane region" description="Helical" evidence="1">
    <location>
        <begin position="357"/>
        <end position="377"/>
    </location>
</feature>
<feature type="topological domain" description="Periplasmic" evidence="1">
    <location>
        <position position="378"/>
    </location>
</feature>
<feature type="transmembrane region" description="Helical" evidence="1">
    <location>
        <begin position="379"/>
        <end position="399"/>
    </location>
</feature>
<feature type="topological domain" description="Cytoplasmic" evidence="1">
    <location>
        <begin position="400"/>
        <end position="416"/>
    </location>
</feature>
<reference key="1">
    <citation type="journal article" date="2009" name="PLoS Genet.">
        <title>Organised genome dynamics in the Escherichia coli species results in highly diverse adaptive paths.</title>
        <authorList>
            <person name="Touchon M."/>
            <person name="Hoede C."/>
            <person name="Tenaillon O."/>
            <person name="Barbe V."/>
            <person name="Baeriswyl S."/>
            <person name="Bidet P."/>
            <person name="Bingen E."/>
            <person name="Bonacorsi S."/>
            <person name="Bouchier C."/>
            <person name="Bouvet O."/>
            <person name="Calteau A."/>
            <person name="Chiapello H."/>
            <person name="Clermont O."/>
            <person name="Cruveiller S."/>
            <person name="Danchin A."/>
            <person name="Diard M."/>
            <person name="Dossat C."/>
            <person name="Karoui M.E."/>
            <person name="Frapy E."/>
            <person name="Garry L."/>
            <person name="Ghigo J.M."/>
            <person name="Gilles A.M."/>
            <person name="Johnson J."/>
            <person name="Le Bouguenec C."/>
            <person name="Lescat M."/>
            <person name="Mangenot S."/>
            <person name="Martinez-Jehanne V."/>
            <person name="Matic I."/>
            <person name="Nassif X."/>
            <person name="Oztas S."/>
            <person name="Petit M.A."/>
            <person name="Pichon C."/>
            <person name="Rouy Z."/>
            <person name="Ruf C.S."/>
            <person name="Schneider D."/>
            <person name="Tourret J."/>
            <person name="Vacherie B."/>
            <person name="Vallenet D."/>
            <person name="Medigue C."/>
            <person name="Rocha E.P.C."/>
            <person name="Denamur E."/>
        </authorList>
    </citation>
    <scope>NUCLEOTIDE SEQUENCE [LARGE SCALE GENOMIC DNA]</scope>
    <source>
        <strain>55989 / EAEC</strain>
    </source>
</reference>
<organism>
    <name type="scientific">Escherichia coli (strain 55989 / EAEC)</name>
    <dbReference type="NCBI Taxonomy" id="585055"/>
    <lineage>
        <taxon>Bacteria</taxon>
        <taxon>Pseudomonadati</taxon>
        <taxon>Pseudomonadota</taxon>
        <taxon>Gammaproteobacteria</taxon>
        <taxon>Enterobacterales</taxon>
        <taxon>Enterobacteriaceae</taxon>
        <taxon>Escherichia</taxon>
    </lineage>
</organism>
<name>ENTS_ECO55</name>
<comment type="function">
    <text evidence="1">Component of an export pathway for enterobactin.</text>
</comment>
<comment type="subcellular location">
    <subcellularLocation>
        <location evidence="1">Cell inner membrane</location>
        <topology evidence="1">Multi-pass membrane protein</topology>
    </subcellularLocation>
</comment>
<comment type="similarity">
    <text evidence="1">Belongs to the major facilitator superfamily. EntS (TC 2.A.1.38) family.</text>
</comment>
<gene>
    <name evidence="1" type="primary">entS</name>
    <name type="ordered locus">EC55989_0583</name>
</gene>
<sequence>MNKQSWLLNLSLLKTHPAFRAVFLARFISIVSLGLLGVAVPVQIQMMTHSTWQVGLSVTLTGGAMFVGLMVGGVLADRYERKKVILLARGTCGIGFIGLCLNALLPEPSLLAIYLLGLWDGFFASLGVTALLAATPALVGRENLMQAGAITMLTVRLGSVISPMIGGLLLATGGVAWNYGLAAAGTFITLLPLLSLPALPPPPQPREHPLKSLLAGFRFLLASPLVGGIALLGGLLTMASAVRVLYPALADNWQMSAAQIGFLYAAIPLGAAIGALTSGKLAHSARPGLLMLLSTLGSFLAIGLFGLMPMWILGVVCLALFGWLSAVSSLLQYTMLQTQTPEAMLGRINGLWTAQNVTGDAIGAALLGGLGAMMTPVASASASGFGLLIIGVLLLLVLVELRRFRQTPPQVTASDS</sequence>
<protein>
    <recommendedName>
        <fullName evidence="1">Enterobactin exporter EntS</fullName>
    </recommendedName>
</protein>
<accession>B7L8H4</accession>
<dbReference type="EMBL" id="CU928145">
    <property type="protein sequence ID" value="CAU96456.1"/>
    <property type="molecule type" value="Genomic_DNA"/>
</dbReference>
<dbReference type="RefSeq" id="WP_001041789.1">
    <property type="nucleotide sequence ID" value="NC_011748.1"/>
</dbReference>
<dbReference type="SMR" id="B7L8H4"/>
<dbReference type="GeneID" id="93776895"/>
<dbReference type="KEGG" id="eck:EC55989_0583"/>
<dbReference type="HOGENOM" id="CLU_034180_11_0_6"/>
<dbReference type="Proteomes" id="UP000000746">
    <property type="component" value="Chromosome"/>
</dbReference>
<dbReference type="GO" id="GO:0005886">
    <property type="term" value="C:plasma membrane"/>
    <property type="evidence" value="ECO:0007669"/>
    <property type="project" value="UniProtKB-SubCell"/>
</dbReference>
<dbReference type="GO" id="GO:0042931">
    <property type="term" value="F:enterobactin transmembrane transporter activity"/>
    <property type="evidence" value="ECO:0007669"/>
    <property type="project" value="InterPro"/>
</dbReference>
<dbReference type="CDD" id="cd06173">
    <property type="entry name" value="MFS_MefA_like"/>
    <property type="match status" value="1"/>
</dbReference>
<dbReference type="FunFam" id="1.20.1250.20:FF:000056">
    <property type="entry name" value="Enterobactin exporter EntS"/>
    <property type="match status" value="1"/>
</dbReference>
<dbReference type="Gene3D" id="1.20.1250.20">
    <property type="entry name" value="MFS general substrate transporter like domains"/>
    <property type="match status" value="1"/>
</dbReference>
<dbReference type="HAMAP" id="MF_01436">
    <property type="entry name" value="MFS_EntS"/>
    <property type="match status" value="1"/>
</dbReference>
<dbReference type="InterPro" id="IPR023722">
    <property type="entry name" value="Enterobactin_exp_EntS"/>
</dbReference>
<dbReference type="InterPro" id="IPR020846">
    <property type="entry name" value="MFS_dom"/>
</dbReference>
<dbReference type="InterPro" id="IPR036259">
    <property type="entry name" value="MFS_trans_sf"/>
</dbReference>
<dbReference type="InterPro" id="IPR010290">
    <property type="entry name" value="TM_effector"/>
</dbReference>
<dbReference type="NCBIfam" id="NF007792">
    <property type="entry name" value="PRK10489.1"/>
    <property type="match status" value="1"/>
</dbReference>
<dbReference type="PANTHER" id="PTHR23513:SF9">
    <property type="entry name" value="ENTEROBACTIN EXPORTER ENTS"/>
    <property type="match status" value="1"/>
</dbReference>
<dbReference type="PANTHER" id="PTHR23513">
    <property type="entry name" value="INTEGRAL MEMBRANE EFFLUX PROTEIN-RELATED"/>
    <property type="match status" value="1"/>
</dbReference>
<dbReference type="Pfam" id="PF05977">
    <property type="entry name" value="MFS_3"/>
    <property type="match status" value="1"/>
</dbReference>
<dbReference type="SUPFAM" id="SSF103473">
    <property type="entry name" value="MFS general substrate transporter"/>
    <property type="match status" value="1"/>
</dbReference>
<dbReference type="PROSITE" id="PS50850">
    <property type="entry name" value="MFS"/>
    <property type="match status" value="1"/>
</dbReference>